<feature type="chain" id="PRO_0000391061" description="UPF0761 membrane protein Veis_3782">
    <location>
        <begin position="1"/>
        <end position="417"/>
    </location>
</feature>
<feature type="transmembrane region" description="Helical" evidence="1">
    <location>
        <begin position="54"/>
        <end position="74"/>
    </location>
</feature>
<feature type="transmembrane region" description="Helical" evidence="1">
    <location>
        <begin position="111"/>
        <end position="131"/>
    </location>
</feature>
<feature type="transmembrane region" description="Helical" evidence="1">
    <location>
        <begin position="151"/>
        <end position="171"/>
    </location>
</feature>
<feature type="transmembrane region" description="Helical" evidence="1">
    <location>
        <begin position="192"/>
        <end position="212"/>
    </location>
</feature>
<feature type="transmembrane region" description="Helical" evidence="1">
    <location>
        <begin position="226"/>
        <end position="246"/>
    </location>
</feature>
<feature type="transmembrane region" description="Helical" evidence="1">
    <location>
        <begin position="261"/>
        <end position="281"/>
    </location>
</feature>
<keyword id="KW-0997">Cell inner membrane</keyword>
<keyword id="KW-1003">Cell membrane</keyword>
<keyword id="KW-0472">Membrane</keyword>
<keyword id="KW-1185">Reference proteome</keyword>
<keyword id="KW-0812">Transmembrane</keyword>
<keyword id="KW-1133">Transmembrane helix</keyword>
<protein>
    <recommendedName>
        <fullName evidence="1">UPF0761 membrane protein Veis_3782</fullName>
    </recommendedName>
</protein>
<organism>
    <name type="scientific">Verminephrobacter eiseniae (strain EF01-2)</name>
    <dbReference type="NCBI Taxonomy" id="391735"/>
    <lineage>
        <taxon>Bacteria</taxon>
        <taxon>Pseudomonadati</taxon>
        <taxon>Pseudomonadota</taxon>
        <taxon>Betaproteobacteria</taxon>
        <taxon>Burkholderiales</taxon>
        <taxon>Comamonadaceae</taxon>
        <taxon>Verminephrobacter</taxon>
    </lineage>
</organism>
<evidence type="ECO:0000255" key="1">
    <source>
        <dbReference type="HAMAP-Rule" id="MF_00672"/>
    </source>
</evidence>
<proteinExistence type="inferred from homology"/>
<reference key="1">
    <citation type="submission" date="2006-12" db="EMBL/GenBank/DDBJ databases">
        <title>Complete sequence of chromosome 1 of Verminephrobacter eiseniae EF01-2.</title>
        <authorList>
            <person name="Copeland A."/>
            <person name="Lucas S."/>
            <person name="Lapidus A."/>
            <person name="Barry K."/>
            <person name="Detter J.C."/>
            <person name="Glavina del Rio T."/>
            <person name="Dalin E."/>
            <person name="Tice H."/>
            <person name="Pitluck S."/>
            <person name="Chertkov O."/>
            <person name="Brettin T."/>
            <person name="Bruce D."/>
            <person name="Han C."/>
            <person name="Tapia R."/>
            <person name="Gilna P."/>
            <person name="Schmutz J."/>
            <person name="Larimer F."/>
            <person name="Land M."/>
            <person name="Hauser L."/>
            <person name="Kyrpides N."/>
            <person name="Kim E."/>
            <person name="Stahl D."/>
            <person name="Richardson P."/>
        </authorList>
    </citation>
    <scope>NUCLEOTIDE SEQUENCE [LARGE SCALE GENOMIC DNA]</scope>
    <source>
        <strain>EF01-2</strain>
    </source>
</reference>
<accession>A1WPD7</accession>
<dbReference type="EMBL" id="CP000542">
    <property type="protein sequence ID" value="ABM59494.1"/>
    <property type="molecule type" value="Genomic_DNA"/>
</dbReference>
<dbReference type="RefSeq" id="WP_011811483.1">
    <property type="nucleotide sequence ID" value="NC_008786.1"/>
</dbReference>
<dbReference type="SMR" id="A1WPD7"/>
<dbReference type="STRING" id="391735.Veis_3782"/>
<dbReference type="GeneID" id="76462153"/>
<dbReference type="KEGG" id="vei:Veis_3782"/>
<dbReference type="eggNOG" id="COG1295">
    <property type="taxonomic scope" value="Bacteria"/>
</dbReference>
<dbReference type="HOGENOM" id="CLU_032288_1_2_4"/>
<dbReference type="OrthoDB" id="9808671at2"/>
<dbReference type="Proteomes" id="UP000000374">
    <property type="component" value="Chromosome"/>
</dbReference>
<dbReference type="GO" id="GO:0005886">
    <property type="term" value="C:plasma membrane"/>
    <property type="evidence" value="ECO:0007669"/>
    <property type="project" value="UniProtKB-SubCell"/>
</dbReference>
<dbReference type="HAMAP" id="MF_00672">
    <property type="entry name" value="UPF0761"/>
    <property type="match status" value="1"/>
</dbReference>
<dbReference type="InterPro" id="IPR023679">
    <property type="entry name" value="UPF0761_bac"/>
</dbReference>
<dbReference type="InterPro" id="IPR017039">
    <property type="entry name" value="Virul_fac_BrkB"/>
</dbReference>
<dbReference type="NCBIfam" id="TIGR00765">
    <property type="entry name" value="yihY_not_rbn"/>
    <property type="match status" value="1"/>
</dbReference>
<dbReference type="PANTHER" id="PTHR30213">
    <property type="entry name" value="INNER MEMBRANE PROTEIN YHJD"/>
    <property type="match status" value="1"/>
</dbReference>
<dbReference type="PANTHER" id="PTHR30213:SF0">
    <property type="entry name" value="UPF0761 MEMBRANE PROTEIN YIHY"/>
    <property type="match status" value="1"/>
</dbReference>
<dbReference type="Pfam" id="PF03631">
    <property type="entry name" value="Virul_fac_BrkB"/>
    <property type="match status" value="1"/>
</dbReference>
<comment type="subcellular location">
    <subcellularLocation>
        <location evidence="1">Cell inner membrane</location>
        <topology evidence="1">Multi-pass membrane protein</topology>
    </subcellularLocation>
</comment>
<comment type="similarity">
    <text evidence="1">Belongs to the UPF0761 family.</text>
</comment>
<gene>
    <name type="ordered locus">Veis_3782</name>
</gene>
<name>Y3782_VEREI</name>
<sequence length="417" mass="45467">MSLPFSLSVAARRIEALLGDLSRFPWKTTAQTLRERFRADHLGLTASSLTFTTILALVPFFTVALAVFTAFPIFGQLQDALQGWLVSSLVPDSIARQVLGYLTQFAAKASGLGLAGFSVLLVTALALILTIDRTLNDIWRVQRLRPLGQRVLIYWAAITLGPLLLGASLALTSYVMSASGGLVKRLPDGVRFLFDSLQFMVLAAGMALLYHYVPNTPVRWRHAWSGGLFVALCIELAKKALALYLGRVPTYSVVYGAFATLPILLVWIYMAWVIVLLGAVVTAYLPSLLAGVARRGTVAGWTFQLALEVLQQLHRVRHDAGKGLRAGQLAQLLRVDVLQLEPVLESLTALDWVGQVSAVVVAASDPPEPRYVLLADPQSTLLEPLVHKLLLERSESLGPLWDKAGLGRLQMADVLAR</sequence>